<name>DTX3_ARATH</name>
<proteinExistence type="inferred from homology"/>
<accession>Q9SIA4</accession>
<evidence type="ECO:0000255" key="1"/>
<evidence type="ECO:0000303" key="2">
    <source>
    </source>
</evidence>
<evidence type="ECO:0000305" key="3"/>
<evidence type="ECO:0000312" key="4">
    <source>
        <dbReference type="Araport" id="AT2G04050"/>
    </source>
</evidence>
<evidence type="ECO:0000312" key="5">
    <source>
        <dbReference type="EMBL" id="AAD28686.1"/>
    </source>
</evidence>
<protein>
    <recommendedName>
        <fullName evidence="2">Protein DETOXIFICATION 3</fullName>
        <shortName evidence="2">AtDTX3</shortName>
    </recommendedName>
    <alternativeName>
        <fullName evidence="3">Multidrug and toxic compound extrusion protein 3</fullName>
        <shortName evidence="3">MATE protein 3</shortName>
    </alternativeName>
</protein>
<dbReference type="EMBL" id="AC007178">
    <property type="protein sequence ID" value="AAD28686.1"/>
    <property type="molecule type" value="Genomic_DNA"/>
</dbReference>
<dbReference type="EMBL" id="CP002685">
    <property type="protein sequence ID" value="AEC05792.1"/>
    <property type="molecule type" value="Genomic_DNA"/>
</dbReference>
<dbReference type="PIR" id="B84454">
    <property type="entry name" value="B84454"/>
</dbReference>
<dbReference type="RefSeq" id="NP_178492.1">
    <property type="nucleotide sequence ID" value="NM_126444.2"/>
</dbReference>
<dbReference type="SMR" id="Q9SIA4"/>
<dbReference type="BioGRID" id="340">
    <property type="interactions" value="9"/>
</dbReference>
<dbReference type="FunCoup" id="Q9SIA4">
    <property type="interactions" value="230"/>
</dbReference>
<dbReference type="IntAct" id="Q9SIA4">
    <property type="interactions" value="7"/>
</dbReference>
<dbReference type="STRING" id="3702.Q9SIA4"/>
<dbReference type="PaxDb" id="3702-AT2G04050.1"/>
<dbReference type="EnsemblPlants" id="AT2G04050.1">
    <property type="protein sequence ID" value="AT2G04050.1"/>
    <property type="gene ID" value="AT2G04050"/>
</dbReference>
<dbReference type="GeneID" id="814939"/>
<dbReference type="Gramene" id="AT2G04050.1">
    <property type="protein sequence ID" value="AT2G04050.1"/>
    <property type="gene ID" value="AT2G04050"/>
</dbReference>
<dbReference type="KEGG" id="ath:AT2G04050"/>
<dbReference type="Araport" id="AT2G04050"/>
<dbReference type="TAIR" id="AT2G04050"/>
<dbReference type="eggNOG" id="KOG1347">
    <property type="taxonomic scope" value="Eukaryota"/>
</dbReference>
<dbReference type="HOGENOM" id="CLU_012893_1_0_1"/>
<dbReference type="InParanoid" id="Q9SIA4"/>
<dbReference type="OMA" id="FINHTHV"/>
<dbReference type="PhylomeDB" id="Q9SIA4"/>
<dbReference type="PRO" id="PR:Q9SIA4"/>
<dbReference type="Proteomes" id="UP000006548">
    <property type="component" value="Chromosome 2"/>
</dbReference>
<dbReference type="ExpressionAtlas" id="Q9SIA4">
    <property type="expression patterns" value="baseline and differential"/>
</dbReference>
<dbReference type="GO" id="GO:0016020">
    <property type="term" value="C:membrane"/>
    <property type="evidence" value="ECO:0007669"/>
    <property type="project" value="UniProtKB-SubCell"/>
</dbReference>
<dbReference type="GO" id="GO:0015297">
    <property type="term" value="F:antiporter activity"/>
    <property type="evidence" value="ECO:0007669"/>
    <property type="project" value="InterPro"/>
</dbReference>
<dbReference type="GO" id="GO:0042910">
    <property type="term" value="F:xenobiotic transmembrane transporter activity"/>
    <property type="evidence" value="ECO:0007669"/>
    <property type="project" value="InterPro"/>
</dbReference>
<dbReference type="GO" id="GO:1990961">
    <property type="term" value="P:xenobiotic detoxification by transmembrane export across the plasma membrane"/>
    <property type="evidence" value="ECO:0007669"/>
    <property type="project" value="InterPro"/>
</dbReference>
<dbReference type="CDD" id="cd13132">
    <property type="entry name" value="MATE_eukaryotic"/>
    <property type="match status" value="1"/>
</dbReference>
<dbReference type="InterPro" id="IPR045069">
    <property type="entry name" value="MATE_euk"/>
</dbReference>
<dbReference type="InterPro" id="IPR002528">
    <property type="entry name" value="MATE_fam"/>
</dbReference>
<dbReference type="NCBIfam" id="TIGR00797">
    <property type="entry name" value="matE"/>
    <property type="match status" value="1"/>
</dbReference>
<dbReference type="PANTHER" id="PTHR11206">
    <property type="entry name" value="MULTIDRUG RESISTANCE PROTEIN"/>
    <property type="match status" value="1"/>
</dbReference>
<dbReference type="Pfam" id="PF01554">
    <property type="entry name" value="MatE"/>
    <property type="match status" value="2"/>
</dbReference>
<organism>
    <name type="scientific">Arabidopsis thaliana</name>
    <name type="common">Mouse-ear cress</name>
    <dbReference type="NCBI Taxonomy" id="3702"/>
    <lineage>
        <taxon>Eukaryota</taxon>
        <taxon>Viridiplantae</taxon>
        <taxon>Streptophyta</taxon>
        <taxon>Embryophyta</taxon>
        <taxon>Tracheophyta</taxon>
        <taxon>Spermatophyta</taxon>
        <taxon>Magnoliopsida</taxon>
        <taxon>eudicotyledons</taxon>
        <taxon>Gunneridae</taxon>
        <taxon>Pentapetalae</taxon>
        <taxon>rosids</taxon>
        <taxon>malvids</taxon>
        <taxon>Brassicales</taxon>
        <taxon>Brassicaceae</taxon>
        <taxon>Camelineae</taxon>
        <taxon>Arabidopsis</taxon>
    </lineage>
</organism>
<feature type="chain" id="PRO_0000405320" description="Protein DETOXIFICATION 3">
    <location>
        <begin position="1"/>
        <end position="476"/>
    </location>
</feature>
<feature type="transmembrane region" description="Helical" evidence="1">
    <location>
        <begin position="35"/>
        <end position="55"/>
    </location>
</feature>
<feature type="transmembrane region" description="Helical" evidence="1">
    <location>
        <begin position="66"/>
        <end position="86"/>
    </location>
</feature>
<feature type="transmembrane region" description="Helical" evidence="1">
    <location>
        <begin position="117"/>
        <end position="137"/>
    </location>
</feature>
<feature type="transmembrane region" description="Helical" evidence="1">
    <location>
        <begin position="146"/>
        <end position="166"/>
    </location>
</feature>
<feature type="transmembrane region" description="Helical" evidence="1">
    <location>
        <begin position="185"/>
        <end position="205"/>
    </location>
</feature>
<feature type="transmembrane region" description="Helical" evidence="1">
    <location>
        <begin position="208"/>
        <end position="228"/>
    </location>
</feature>
<feature type="transmembrane region" description="Helical" evidence="1">
    <location>
        <begin position="260"/>
        <end position="280"/>
    </location>
</feature>
<feature type="transmembrane region" description="Helical" evidence="1">
    <location>
        <begin position="289"/>
        <end position="309"/>
    </location>
</feature>
<feature type="transmembrane region" description="Helical" evidence="1">
    <location>
        <begin position="331"/>
        <end position="351"/>
    </location>
</feature>
<feature type="transmembrane region" description="Helical" evidence="1">
    <location>
        <begin position="370"/>
        <end position="390"/>
    </location>
</feature>
<feature type="transmembrane region" description="Helical" evidence="1">
    <location>
        <begin position="402"/>
        <end position="422"/>
    </location>
</feature>
<feature type="transmembrane region" description="Helical" evidence="1">
    <location>
        <begin position="433"/>
        <end position="453"/>
    </location>
</feature>
<sequence>MEEPFLLQDEHLVPCKDTWKSGQVTVELKKVSSLAAPMAAVTIAQYLLPVISVMVAGHNGELQLSGVALATSFTNVSGFSILFGLAGALETLCGQAYGAKQYEKIGTYTYSATASNIPICVLISVLWIYIEKLLISLGQDPDISRVAGSYALWLIPALFAHAFFIPLTRFLLAQGLVLPLLYCTLTTLLFHIPVCWAFVYAFGLGSNGAAMAISVSFWFYVVILSCYVRYSSSCDKTRVFVSSDFVSCIKQFFHFGVPSAAMVCLEWWLFELLILCSGLLPNPKLETSVLSICLTTASLHYVIPGGVAAAVSTRVSNKLGAGIPQVARVSVLAGLCLWLVESAFFSTLLFTCRNIIGYAFSNSKEVVDYVANLTPLLCLSFILDGFTAVLNGVARGSGWQHIGALNNVVAYYLVGAPVGVYLAFNRELNGKGLWCGVVVGSAVQAIILAFVTASINWKEQAEKARKRMVSSENRLA</sequence>
<comment type="subcellular location">
    <subcellularLocation>
        <location evidence="1">Membrane</location>
        <topology evidence="1">Multi-pass membrane protein</topology>
    </subcellularLocation>
</comment>
<comment type="similarity">
    <text evidence="3">Belongs to the multi antimicrobial extrusion (MATE) (TC 2.A.66.1) family.</text>
</comment>
<gene>
    <name evidence="2" type="primary">DTX3</name>
    <name evidence="4" type="ordered locus">At2g04050</name>
    <name evidence="5" type="ORF">F3L12.12</name>
</gene>
<keyword id="KW-0472">Membrane</keyword>
<keyword id="KW-1185">Reference proteome</keyword>
<keyword id="KW-0812">Transmembrane</keyword>
<keyword id="KW-1133">Transmembrane helix</keyword>
<keyword id="KW-0813">Transport</keyword>
<reference key="1">
    <citation type="journal article" date="1999" name="Nature">
        <title>Sequence and analysis of chromosome 2 of the plant Arabidopsis thaliana.</title>
        <authorList>
            <person name="Lin X."/>
            <person name="Kaul S."/>
            <person name="Rounsley S.D."/>
            <person name="Shea T.P."/>
            <person name="Benito M.-I."/>
            <person name="Town C.D."/>
            <person name="Fujii C.Y."/>
            <person name="Mason T.M."/>
            <person name="Bowman C.L."/>
            <person name="Barnstead M.E."/>
            <person name="Feldblyum T.V."/>
            <person name="Buell C.R."/>
            <person name="Ketchum K.A."/>
            <person name="Lee J.J."/>
            <person name="Ronning C.M."/>
            <person name="Koo H.L."/>
            <person name="Moffat K.S."/>
            <person name="Cronin L.A."/>
            <person name="Shen M."/>
            <person name="Pai G."/>
            <person name="Van Aken S."/>
            <person name="Umayam L."/>
            <person name="Tallon L.J."/>
            <person name="Gill J.E."/>
            <person name="Adams M.D."/>
            <person name="Carrera A.J."/>
            <person name="Creasy T.H."/>
            <person name="Goodman H.M."/>
            <person name="Somerville C.R."/>
            <person name="Copenhaver G.P."/>
            <person name="Preuss D."/>
            <person name="Nierman W.C."/>
            <person name="White O."/>
            <person name="Eisen J.A."/>
            <person name="Salzberg S.L."/>
            <person name="Fraser C.M."/>
            <person name="Venter J.C."/>
        </authorList>
    </citation>
    <scope>NUCLEOTIDE SEQUENCE [LARGE SCALE GENOMIC DNA]</scope>
    <source>
        <strain>cv. Columbia</strain>
    </source>
</reference>
<reference key="2">
    <citation type="journal article" date="2017" name="Plant J.">
        <title>Araport11: a complete reannotation of the Arabidopsis thaliana reference genome.</title>
        <authorList>
            <person name="Cheng C.Y."/>
            <person name="Krishnakumar V."/>
            <person name="Chan A.P."/>
            <person name="Thibaud-Nissen F."/>
            <person name="Schobel S."/>
            <person name="Town C.D."/>
        </authorList>
    </citation>
    <scope>GENOME REANNOTATION</scope>
    <source>
        <strain>cv. Columbia</strain>
    </source>
</reference>
<reference key="3">
    <citation type="journal article" date="2002" name="J. Biol. Chem.">
        <title>Functional cloning and characterization of a plant efflux carrier for multidrug and heavy metal detoxification.</title>
        <authorList>
            <person name="Li L."/>
            <person name="He Z."/>
            <person name="Pandey G.K."/>
            <person name="Tsuchiya T."/>
            <person name="Luan S."/>
        </authorList>
    </citation>
    <scope>GENE FAMILY</scope>
    <scope>NOMENCLATURE</scope>
</reference>
<reference key="4">
    <citation type="journal article" date="2003" name="Eur. J. Biochem.">
        <title>The multidrug/oligosaccharidyl-lipid/polysaccharide (MOP) exporter superfamily.</title>
        <authorList>
            <person name="Hvorup R.N."/>
            <person name="Winnen B."/>
            <person name="Chang A.B."/>
            <person name="Jiang Y."/>
            <person name="Zhou X.F."/>
            <person name="Saier M.H. Jr."/>
        </authorList>
    </citation>
    <scope>GENE FAMILY</scope>
</reference>